<evidence type="ECO:0000250" key="1"/>
<evidence type="ECO:0000255" key="2"/>
<evidence type="ECO:0000305" key="3"/>
<name>IL3_CALJA</name>
<organism>
    <name type="scientific">Callithrix jacchus</name>
    <name type="common">White-tufted-ear marmoset</name>
    <dbReference type="NCBI Taxonomy" id="9483"/>
    <lineage>
        <taxon>Eukaryota</taxon>
        <taxon>Metazoa</taxon>
        <taxon>Chordata</taxon>
        <taxon>Craniata</taxon>
        <taxon>Vertebrata</taxon>
        <taxon>Euteleostomi</taxon>
        <taxon>Mammalia</taxon>
        <taxon>Eutheria</taxon>
        <taxon>Euarchontoglires</taxon>
        <taxon>Primates</taxon>
        <taxon>Haplorrhini</taxon>
        <taxon>Platyrrhini</taxon>
        <taxon>Cebidae</taxon>
        <taxon>Callitrichinae</taxon>
        <taxon>Callithrix</taxon>
        <taxon>Callithrix</taxon>
    </lineage>
</organism>
<protein>
    <recommendedName>
        <fullName>Interleukin-3</fullName>
        <shortName>IL-3</shortName>
    </recommendedName>
    <alternativeName>
        <fullName>Hematopoietic growth factor</fullName>
    </alternativeName>
    <alternativeName>
        <fullName>Mast cell growth factor</fullName>
        <shortName>MCGF</shortName>
    </alternativeName>
    <alternativeName>
        <fullName>Multipotential colony-stimulating factor</fullName>
    </alternativeName>
    <alternativeName>
        <fullName>P-cell-stimulating factor</fullName>
    </alternativeName>
</protein>
<proteinExistence type="evidence at transcript level"/>
<comment type="function">
    <text evidence="1">Granulocyte/macrophage colony-stimulating factors are cytokines that act in hematopoiesis by controlling the production, differentiation, and function of 2 related white cell populations of the blood, the granulocytes and the monocytes-macrophages.</text>
</comment>
<comment type="function">
    <text evidence="1">This CSF induces granulocytes, macrophages, mast cells, stem cells, erythroid cells, eosinophils and megakaryocytes.</text>
</comment>
<comment type="subunit">
    <text evidence="1">Monomer.</text>
</comment>
<comment type="subcellular location">
    <subcellularLocation>
        <location>Secreted</location>
    </subcellularLocation>
</comment>
<comment type="tissue specificity">
    <text>Activated T-cells, mast cells, natural killer cells.</text>
</comment>
<comment type="similarity">
    <text evidence="3">Belongs to the IL-3 family.</text>
</comment>
<keyword id="KW-0202">Cytokine</keyword>
<keyword id="KW-1015">Disulfide bond</keyword>
<keyword id="KW-0325">Glycoprotein</keyword>
<keyword id="KW-0339">Growth factor</keyword>
<keyword id="KW-1185">Reference proteome</keyword>
<keyword id="KW-0964">Secreted</keyword>
<keyword id="KW-0732">Signal</keyword>
<gene>
    <name type="primary">IL3</name>
</gene>
<dbReference type="EMBL" id="X74877">
    <property type="protein sequence ID" value="CAA52864.1"/>
    <property type="molecule type" value="mRNA"/>
</dbReference>
<dbReference type="PIR" id="S42721">
    <property type="entry name" value="S42721"/>
</dbReference>
<dbReference type="RefSeq" id="XP_002744658.1">
    <property type="nucleotide sequence ID" value="XM_002744612.2"/>
</dbReference>
<dbReference type="SMR" id="Q28334"/>
<dbReference type="FunCoup" id="Q28334">
    <property type="interactions" value="778"/>
</dbReference>
<dbReference type="STRING" id="9483.ENSCJAP00000023670"/>
<dbReference type="GlyCosmos" id="Q28334">
    <property type="glycosylation" value="1 site, No reported glycans"/>
</dbReference>
<dbReference type="Ensembl" id="ENSCJAT00000025040.5">
    <property type="protein sequence ID" value="ENSCJAP00000023670.2"/>
    <property type="gene ID" value="ENSCJAG00000012921.5"/>
</dbReference>
<dbReference type="eggNOG" id="ENOG502TD4X">
    <property type="taxonomic scope" value="Eukaryota"/>
</dbReference>
<dbReference type="GeneTree" id="ENSGT00940000163393"/>
<dbReference type="HOGENOM" id="CLU_144877_0_0_1"/>
<dbReference type="InParanoid" id="Q28334"/>
<dbReference type="OMA" id="IKDGDWN"/>
<dbReference type="TreeFam" id="TF338567"/>
<dbReference type="Proteomes" id="UP000008225">
    <property type="component" value="Chromosome 2"/>
</dbReference>
<dbReference type="GO" id="GO:0005615">
    <property type="term" value="C:extracellular space"/>
    <property type="evidence" value="ECO:0007669"/>
    <property type="project" value="UniProtKB-KW"/>
</dbReference>
<dbReference type="GO" id="GO:0005125">
    <property type="term" value="F:cytokine activity"/>
    <property type="evidence" value="ECO:0007669"/>
    <property type="project" value="UniProtKB-KW"/>
</dbReference>
<dbReference type="GO" id="GO:0008083">
    <property type="term" value="F:growth factor activity"/>
    <property type="evidence" value="ECO:0007669"/>
    <property type="project" value="UniProtKB-KW"/>
</dbReference>
<dbReference type="GO" id="GO:0005135">
    <property type="term" value="F:interleukin-3 receptor binding"/>
    <property type="evidence" value="ECO:0007669"/>
    <property type="project" value="InterPro"/>
</dbReference>
<dbReference type="GO" id="GO:0097696">
    <property type="term" value="P:cell surface receptor signaling pathway via STAT"/>
    <property type="evidence" value="ECO:0007669"/>
    <property type="project" value="Ensembl"/>
</dbReference>
<dbReference type="GO" id="GO:0035162">
    <property type="term" value="P:embryonic hemopoiesis"/>
    <property type="evidence" value="ECO:0007669"/>
    <property type="project" value="Ensembl"/>
</dbReference>
<dbReference type="GO" id="GO:0006955">
    <property type="term" value="P:immune response"/>
    <property type="evidence" value="ECO:0007669"/>
    <property type="project" value="InterPro"/>
</dbReference>
<dbReference type="GO" id="GO:0038156">
    <property type="term" value="P:interleukin-3-mediated signaling pathway"/>
    <property type="evidence" value="ECO:0007669"/>
    <property type="project" value="Ensembl"/>
</dbReference>
<dbReference type="GO" id="GO:0008284">
    <property type="term" value="P:positive regulation of cell population proliferation"/>
    <property type="evidence" value="ECO:0007669"/>
    <property type="project" value="Ensembl"/>
</dbReference>
<dbReference type="Gene3D" id="1.20.1250.10">
    <property type="match status" value="1"/>
</dbReference>
<dbReference type="InterPro" id="IPR009079">
    <property type="entry name" value="4_helix_cytokine-like_core"/>
</dbReference>
<dbReference type="InterPro" id="IPR002183">
    <property type="entry name" value="IL-3"/>
</dbReference>
<dbReference type="PANTHER" id="PTHR48489">
    <property type="entry name" value="INTERLEUKIN-3"/>
    <property type="match status" value="1"/>
</dbReference>
<dbReference type="PANTHER" id="PTHR48489:SF1">
    <property type="entry name" value="INTERLEUKIN-3"/>
    <property type="match status" value="1"/>
</dbReference>
<dbReference type="Pfam" id="PF02059">
    <property type="entry name" value="IL3"/>
    <property type="match status" value="1"/>
</dbReference>
<dbReference type="PIRSF" id="PIRSF001939">
    <property type="entry name" value="IL-3"/>
    <property type="match status" value="1"/>
</dbReference>
<dbReference type="PRINTS" id="PR00430">
    <property type="entry name" value="INTERLEUKIN3"/>
</dbReference>
<dbReference type="SUPFAM" id="SSF47266">
    <property type="entry name" value="4-helical cytokines"/>
    <property type="match status" value="1"/>
</dbReference>
<feature type="signal peptide" evidence="1">
    <location>
        <begin position="1"/>
        <end position="18"/>
    </location>
</feature>
<feature type="chain" id="PRO_0000015514" description="Interleukin-3">
    <location>
        <begin position="19"/>
        <end position="142"/>
    </location>
</feature>
<feature type="glycosylation site" description="N-linked (GlcNAc...) asparagine" evidence="2">
    <location>
        <position position="33"/>
    </location>
</feature>
<feature type="disulfide bond" evidence="1">
    <location>
        <begin position="34"/>
        <end position="102"/>
    </location>
</feature>
<reference key="1">
    <citation type="journal article" date="1994" name="Biochim. Biophys. Acta">
        <title>Cloning and expression of interleukin-3 genes of chimpanzee and New World monkeys.</title>
        <authorList>
            <person name="Burger H."/>
            <person name="Mostert M.C."/>
            <person name="Kok E.M."/>
            <person name="Wagemaker G."/>
            <person name="Dorssers L.C.J."/>
        </authorList>
    </citation>
    <scope>NUCLEOTIDE SEQUENCE [MRNA]</scope>
</reference>
<reference key="2">
    <citation type="journal article" date="1994" name="J. Mol. Evol.">
        <title>Molecular evolution of interleukin-3.</title>
        <authorList>
            <person name="Burger H."/>
            <person name="Wagemaker G."/>
            <person name="Leunissen J.A.M."/>
            <person name="Dorssers L.C.J."/>
        </authorList>
    </citation>
    <scope>NUCLEOTIDE SEQUENCE [MRNA]</scope>
</reference>
<accession>Q28334</accession>
<sequence length="142" mass="15980">MSHLPILLLLLLVSPGLQAAPTQTMPLKTTQVNCSNLREEIVTLLNQPPLASSNFNNLNREDQRILMKPNLRKPNLEAFQKAVKSLQNAAAIESNLKDLPVCLPTATNAATQHPIRIKDGDWNDFQMKLKFYLKTLEIKQPQ</sequence>